<comment type="function">
    <text evidence="1">Monothiol glutaredoxin involved in the biogenesis of iron-sulfur clusters.</text>
</comment>
<comment type="subunit">
    <text evidence="1">Homodimer.</text>
</comment>
<comment type="subcellular location">
    <subcellularLocation>
        <location evidence="1">Cytoplasm</location>
    </subcellularLocation>
</comment>
<comment type="similarity">
    <text evidence="3">Belongs to the glutaredoxin family. Monothiol subfamily.</text>
</comment>
<organism>
    <name type="scientific">Buchnera aphidicola subsp. Baizongia pistaciae (strain Bp)</name>
    <dbReference type="NCBI Taxonomy" id="224915"/>
    <lineage>
        <taxon>Bacteria</taxon>
        <taxon>Pseudomonadati</taxon>
        <taxon>Pseudomonadota</taxon>
        <taxon>Gammaproteobacteria</taxon>
        <taxon>Enterobacterales</taxon>
        <taxon>Erwiniaceae</taxon>
        <taxon>Buchnera</taxon>
    </lineage>
</organism>
<proteinExistence type="inferred from homology"/>
<accession>Q89AR8</accession>
<name>GLRX4_BUCBP</name>
<dbReference type="EMBL" id="AE016826">
    <property type="protein sequence ID" value="AAO26908.1"/>
    <property type="molecule type" value="Genomic_DNA"/>
</dbReference>
<dbReference type="RefSeq" id="WP_011091309.1">
    <property type="nucleotide sequence ID" value="NC_004545.1"/>
</dbReference>
<dbReference type="SMR" id="Q89AR8"/>
<dbReference type="STRING" id="224915.bbp_176"/>
<dbReference type="KEGG" id="bab:bbp_176"/>
<dbReference type="eggNOG" id="COG0278">
    <property type="taxonomic scope" value="Bacteria"/>
</dbReference>
<dbReference type="HOGENOM" id="CLU_026126_2_1_6"/>
<dbReference type="OrthoDB" id="9804115at2"/>
<dbReference type="Proteomes" id="UP000000601">
    <property type="component" value="Chromosome"/>
</dbReference>
<dbReference type="GO" id="GO:0005737">
    <property type="term" value="C:cytoplasm"/>
    <property type="evidence" value="ECO:0007669"/>
    <property type="project" value="UniProtKB-SubCell"/>
</dbReference>
<dbReference type="GO" id="GO:0051537">
    <property type="term" value="F:2 iron, 2 sulfur cluster binding"/>
    <property type="evidence" value="ECO:0007669"/>
    <property type="project" value="UniProtKB-KW"/>
</dbReference>
<dbReference type="GO" id="GO:0015036">
    <property type="term" value="F:disulfide oxidoreductase activity"/>
    <property type="evidence" value="ECO:0007669"/>
    <property type="project" value="InterPro"/>
</dbReference>
<dbReference type="GO" id="GO:0046872">
    <property type="term" value="F:metal ion binding"/>
    <property type="evidence" value="ECO:0007669"/>
    <property type="project" value="UniProtKB-KW"/>
</dbReference>
<dbReference type="CDD" id="cd03028">
    <property type="entry name" value="GRX_PICOT_like"/>
    <property type="match status" value="1"/>
</dbReference>
<dbReference type="Gene3D" id="3.40.30.10">
    <property type="entry name" value="Glutaredoxin"/>
    <property type="match status" value="1"/>
</dbReference>
<dbReference type="InterPro" id="IPR002109">
    <property type="entry name" value="Glutaredoxin"/>
</dbReference>
<dbReference type="InterPro" id="IPR033658">
    <property type="entry name" value="GRX_PICOT-like"/>
</dbReference>
<dbReference type="InterPro" id="IPR014434">
    <property type="entry name" value="Monothiol_GRX"/>
</dbReference>
<dbReference type="InterPro" id="IPR004480">
    <property type="entry name" value="Monothiol_GRX-rel"/>
</dbReference>
<dbReference type="InterPro" id="IPR036249">
    <property type="entry name" value="Thioredoxin-like_sf"/>
</dbReference>
<dbReference type="NCBIfam" id="TIGR00365">
    <property type="entry name" value="Grx4 family monothiol glutaredoxin"/>
    <property type="match status" value="1"/>
</dbReference>
<dbReference type="PANTHER" id="PTHR10293">
    <property type="entry name" value="GLUTAREDOXIN FAMILY MEMBER"/>
    <property type="match status" value="1"/>
</dbReference>
<dbReference type="PANTHER" id="PTHR10293:SF72">
    <property type="entry name" value="MONOTHIOL GLUTAREDOXIN-S14, CHLOROPLASTIC"/>
    <property type="match status" value="1"/>
</dbReference>
<dbReference type="Pfam" id="PF00462">
    <property type="entry name" value="Glutaredoxin"/>
    <property type="match status" value="1"/>
</dbReference>
<dbReference type="PIRSF" id="PIRSF005894">
    <property type="entry name" value="Monothiol_GRX"/>
    <property type="match status" value="1"/>
</dbReference>
<dbReference type="SUPFAM" id="SSF52833">
    <property type="entry name" value="Thioredoxin-like"/>
    <property type="match status" value="1"/>
</dbReference>
<dbReference type="PROSITE" id="PS51354">
    <property type="entry name" value="GLUTAREDOXIN_2"/>
    <property type="match status" value="1"/>
</dbReference>
<protein>
    <recommendedName>
        <fullName>Glutaredoxin 4</fullName>
        <shortName>Grx4</shortName>
    </recommendedName>
    <alternativeName>
        <fullName>Monothiol glutaredoxin</fullName>
    </alternativeName>
</protein>
<sequence length="108" mass="12065">MNDIIKKIQNQIQNNPIIIYMKGSPDAPSCGFSAQAVHAISSCGKKFAYIDVLKNPDIRLELPKYANWPTFPQLWVNGELIGGCNIILELFQKGELKKTISICDKLNS</sequence>
<gene>
    <name type="primary">grxD</name>
    <name type="ordered locus">bbp_176</name>
</gene>
<reference key="1">
    <citation type="journal article" date="2003" name="Proc. Natl. Acad. Sci. U.S.A.">
        <title>Reductive genome evolution in Buchnera aphidicola.</title>
        <authorList>
            <person name="van Ham R.C.H.J."/>
            <person name="Kamerbeek J."/>
            <person name="Palacios C."/>
            <person name="Rausell C."/>
            <person name="Abascal F."/>
            <person name="Bastolla U."/>
            <person name="Fernandez J.M."/>
            <person name="Jimenez L."/>
            <person name="Postigo M."/>
            <person name="Silva F.J."/>
            <person name="Tamames J."/>
            <person name="Viguera E."/>
            <person name="Latorre A."/>
            <person name="Valencia A."/>
            <person name="Moran F."/>
            <person name="Moya A."/>
        </authorList>
    </citation>
    <scope>NUCLEOTIDE SEQUENCE [LARGE SCALE GENOMIC DNA]</scope>
    <source>
        <strain>Bp</strain>
    </source>
</reference>
<evidence type="ECO:0000250" key="1"/>
<evidence type="ECO:0000255" key="2">
    <source>
        <dbReference type="PROSITE-ProRule" id="PRU00686"/>
    </source>
</evidence>
<evidence type="ECO:0000305" key="3"/>
<feature type="chain" id="PRO_0000102256" description="Glutaredoxin 4">
    <location>
        <begin position="1"/>
        <end position="108"/>
    </location>
</feature>
<feature type="domain" description="Glutaredoxin" evidence="2">
    <location>
        <begin position="5"/>
        <end position="107"/>
    </location>
</feature>
<feature type="binding site" evidence="1">
    <location>
        <position position="22"/>
    </location>
    <ligand>
        <name>glutathione</name>
        <dbReference type="ChEBI" id="CHEBI:57925"/>
    </ligand>
</feature>
<feature type="binding site" evidence="1">
    <location>
        <position position="30"/>
    </location>
    <ligand>
        <name>[2Fe-2S] cluster</name>
        <dbReference type="ChEBI" id="CHEBI:190135"/>
        <note>ligand shared between dimeric partners</note>
    </ligand>
</feature>
<feature type="binding site" evidence="1">
    <location>
        <position position="59"/>
    </location>
    <ligand>
        <name>glutathione</name>
        <dbReference type="ChEBI" id="CHEBI:57925"/>
    </ligand>
</feature>
<feature type="binding site" evidence="1">
    <location>
        <position position="71"/>
    </location>
    <ligand>
        <name>glutathione</name>
        <dbReference type="ChEBI" id="CHEBI:57925"/>
    </ligand>
</feature>
<feature type="binding site" evidence="1">
    <location>
        <begin position="84"/>
        <end position="85"/>
    </location>
    <ligand>
        <name>glutathione</name>
        <dbReference type="ChEBI" id="CHEBI:57925"/>
    </ligand>
</feature>
<keyword id="KW-0001">2Fe-2S</keyword>
<keyword id="KW-0963">Cytoplasm</keyword>
<keyword id="KW-0408">Iron</keyword>
<keyword id="KW-0411">Iron-sulfur</keyword>
<keyword id="KW-0479">Metal-binding</keyword>
<keyword id="KW-0676">Redox-active center</keyword>
<keyword id="KW-1185">Reference proteome</keyword>